<protein>
    <recommendedName>
        <fullName evidence="1">6-phosphogluconolactonase</fullName>
        <shortName evidence="1">6-P-gluconolactonase</shortName>
        <ecNumber evidence="1">3.1.1.31</ecNumber>
    </recommendedName>
</protein>
<name>6PGL_KLEP3</name>
<comment type="function">
    <text evidence="1">Catalyzes the hydrolysis of 6-phosphogluconolactone to 6-phosphogluconate.</text>
</comment>
<comment type="catalytic activity">
    <reaction evidence="1">
        <text>6-phospho-D-glucono-1,5-lactone + H2O = 6-phospho-D-gluconate + H(+)</text>
        <dbReference type="Rhea" id="RHEA:12556"/>
        <dbReference type="ChEBI" id="CHEBI:15377"/>
        <dbReference type="ChEBI" id="CHEBI:15378"/>
        <dbReference type="ChEBI" id="CHEBI:57955"/>
        <dbReference type="ChEBI" id="CHEBI:58759"/>
        <dbReference type="EC" id="3.1.1.31"/>
    </reaction>
</comment>
<comment type="pathway">
    <text evidence="1">Carbohydrate degradation; pentose phosphate pathway; D-ribulose 5-phosphate from D-glucose 6-phosphate (oxidative stage): step 2/3.</text>
</comment>
<comment type="similarity">
    <text evidence="1">Belongs to the cycloisomerase 2 family.</text>
</comment>
<keyword id="KW-0119">Carbohydrate metabolism</keyword>
<keyword id="KW-0313">Glucose metabolism</keyword>
<keyword id="KW-0378">Hydrolase</keyword>
<organism>
    <name type="scientific">Klebsiella pneumoniae (strain 342)</name>
    <dbReference type="NCBI Taxonomy" id="507522"/>
    <lineage>
        <taxon>Bacteria</taxon>
        <taxon>Pseudomonadati</taxon>
        <taxon>Pseudomonadota</taxon>
        <taxon>Gammaproteobacteria</taxon>
        <taxon>Enterobacterales</taxon>
        <taxon>Enterobacteriaceae</taxon>
        <taxon>Klebsiella/Raoultella group</taxon>
        <taxon>Klebsiella</taxon>
        <taxon>Klebsiella pneumoniae complex</taxon>
    </lineage>
</organism>
<evidence type="ECO:0000255" key="1">
    <source>
        <dbReference type="HAMAP-Rule" id="MF_01605"/>
    </source>
</evidence>
<sequence>MKQTVYTASPESQQIHVWSLEADGKLTLVQVVDAPGQVQPMVVSPNKEYLYVGVRPEFRVLAYRITPDNGALTFAGEAALPGSPTHISTDHHGRFVFSASYNQGCVSVTPLQDGLPGETVTVVEGLEGCHSANISPDNRTLWVPALKQDRICLFTLSEDGFLSAQEPAEVTTVDGAGPRHMVFHPNQQYGYCVNELNSSVDVWELKDPNGNIECVQTLDMMPQDFTGVRWAADIHITPDGRHLYACDRTASIITVFSVSEDGSVLAVEGYQPTETQPRGFNLDHSGKYLIAAGQKSHHIAVYEIEGEQGLLHEKGRYAVGQGPMWVVVNAH</sequence>
<accession>B5XZA0</accession>
<feature type="chain" id="PRO_1000148160" description="6-phosphogluconolactonase">
    <location>
        <begin position="1"/>
        <end position="331"/>
    </location>
</feature>
<gene>
    <name evidence="1" type="primary">pgl</name>
    <name type="ordered locus">KPK_3798</name>
</gene>
<dbReference type="EC" id="3.1.1.31" evidence="1"/>
<dbReference type="EMBL" id="CP000964">
    <property type="protein sequence ID" value="ACI10293.1"/>
    <property type="molecule type" value="Genomic_DNA"/>
</dbReference>
<dbReference type="SMR" id="B5XZA0"/>
<dbReference type="KEGG" id="kpe:KPK_3798"/>
<dbReference type="HOGENOM" id="CLU_038716_2_0_6"/>
<dbReference type="UniPathway" id="UPA00115">
    <property type="reaction ID" value="UER00409"/>
</dbReference>
<dbReference type="Proteomes" id="UP000001734">
    <property type="component" value="Chromosome"/>
</dbReference>
<dbReference type="GO" id="GO:0005829">
    <property type="term" value="C:cytosol"/>
    <property type="evidence" value="ECO:0007669"/>
    <property type="project" value="TreeGrafter"/>
</dbReference>
<dbReference type="GO" id="GO:0017057">
    <property type="term" value="F:6-phosphogluconolactonase activity"/>
    <property type="evidence" value="ECO:0007669"/>
    <property type="project" value="UniProtKB-UniRule"/>
</dbReference>
<dbReference type="GO" id="GO:0006006">
    <property type="term" value="P:glucose metabolic process"/>
    <property type="evidence" value="ECO:0007669"/>
    <property type="project" value="UniProtKB-KW"/>
</dbReference>
<dbReference type="GO" id="GO:0009051">
    <property type="term" value="P:pentose-phosphate shunt, oxidative branch"/>
    <property type="evidence" value="ECO:0007669"/>
    <property type="project" value="UniProtKB-UniRule"/>
</dbReference>
<dbReference type="FunFam" id="2.130.10.10:FF:000051">
    <property type="entry name" value="6-phosphogluconolactonase"/>
    <property type="match status" value="1"/>
</dbReference>
<dbReference type="Gene3D" id="2.130.10.10">
    <property type="entry name" value="YVTN repeat-like/Quinoprotein amine dehydrogenase"/>
    <property type="match status" value="1"/>
</dbReference>
<dbReference type="HAMAP" id="MF_01605">
    <property type="entry name" value="6P_gluconolactonase"/>
    <property type="match status" value="1"/>
</dbReference>
<dbReference type="InterPro" id="IPR022528">
    <property type="entry name" value="6-phosphogluconolactonase_YbhE"/>
</dbReference>
<dbReference type="InterPro" id="IPR050282">
    <property type="entry name" value="Cycloisomerase_2"/>
</dbReference>
<dbReference type="InterPro" id="IPR019405">
    <property type="entry name" value="Lactonase_7-beta_prop"/>
</dbReference>
<dbReference type="InterPro" id="IPR011045">
    <property type="entry name" value="N2O_reductase_N"/>
</dbReference>
<dbReference type="InterPro" id="IPR015943">
    <property type="entry name" value="WD40/YVTN_repeat-like_dom_sf"/>
</dbReference>
<dbReference type="NCBIfam" id="NF008258">
    <property type="entry name" value="PRK11028.1"/>
    <property type="match status" value="1"/>
</dbReference>
<dbReference type="PANTHER" id="PTHR30344:SF1">
    <property type="entry name" value="6-PHOSPHOGLUCONOLACTONASE"/>
    <property type="match status" value="1"/>
</dbReference>
<dbReference type="PANTHER" id="PTHR30344">
    <property type="entry name" value="6-PHOSPHOGLUCONOLACTONASE-RELATED"/>
    <property type="match status" value="1"/>
</dbReference>
<dbReference type="Pfam" id="PF10282">
    <property type="entry name" value="Lactonase"/>
    <property type="match status" value="1"/>
</dbReference>
<dbReference type="SUPFAM" id="SSF50974">
    <property type="entry name" value="Nitrous oxide reductase, N-terminal domain"/>
    <property type="match status" value="2"/>
</dbReference>
<reference key="1">
    <citation type="journal article" date="2008" name="PLoS Genet.">
        <title>Complete genome sequence of the N2-fixing broad host range endophyte Klebsiella pneumoniae 342 and virulence predictions verified in mice.</title>
        <authorList>
            <person name="Fouts D.E."/>
            <person name="Tyler H.L."/>
            <person name="DeBoy R.T."/>
            <person name="Daugherty S."/>
            <person name="Ren Q."/>
            <person name="Badger J.H."/>
            <person name="Durkin A.S."/>
            <person name="Huot H."/>
            <person name="Shrivastava S."/>
            <person name="Kothari S."/>
            <person name="Dodson R.J."/>
            <person name="Mohamoud Y."/>
            <person name="Khouri H."/>
            <person name="Roesch L.F.W."/>
            <person name="Krogfelt K.A."/>
            <person name="Struve C."/>
            <person name="Triplett E.W."/>
            <person name="Methe B.A."/>
        </authorList>
    </citation>
    <scope>NUCLEOTIDE SEQUENCE [LARGE SCALE GENOMIC DNA]</scope>
    <source>
        <strain>342</strain>
    </source>
</reference>
<proteinExistence type="inferred from homology"/>